<name>HPS6_RAT</name>
<gene>
    <name type="primary">Hps6</name>
</gene>
<feature type="chain" id="PRO_0000084058" description="BLOC-2 complex member HPS6">
    <location>
        <begin position="1"/>
        <end position="809"/>
    </location>
</feature>
<feature type="region of interest" description="Disordered" evidence="2">
    <location>
        <begin position="747"/>
        <end position="809"/>
    </location>
</feature>
<feature type="compositionally biased region" description="Polar residues" evidence="2">
    <location>
        <begin position="747"/>
        <end position="760"/>
    </location>
</feature>
<evidence type="ECO:0000250" key="1">
    <source>
        <dbReference type="UniProtKB" id="Q86YV9"/>
    </source>
</evidence>
<evidence type="ECO:0000256" key="2">
    <source>
        <dbReference type="SAM" id="MobiDB-lite"/>
    </source>
</evidence>
<evidence type="ECO:0000269" key="3">
    <source>
    </source>
</evidence>
<evidence type="ECO:0000305" key="4"/>
<reference key="1">
    <citation type="journal article" date="2004" name="Nature">
        <title>Genome sequence of the Brown Norway rat yields insights into mammalian evolution.</title>
        <authorList>
            <person name="Gibbs R.A."/>
            <person name="Weinstock G.M."/>
            <person name="Metzker M.L."/>
            <person name="Muzny D.M."/>
            <person name="Sodergren E.J."/>
            <person name="Scherer S."/>
            <person name="Scott G."/>
            <person name="Steffen D."/>
            <person name="Worley K.C."/>
            <person name="Burch P.E."/>
            <person name="Okwuonu G."/>
            <person name="Hines S."/>
            <person name="Lewis L."/>
            <person name="Deramo C."/>
            <person name="Delgado O."/>
            <person name="Dugan-Rocha S."/>
            <person name="Miner G."/>
            <person name="Morgan M."/>
            <person name="Hawes A."/>
            <person name="Gill R."/>
            <person name="Holt R.A."/>
            <person name="Adams M.D."/>
            <person name="Amanatides P.G."/>
            <person name="Baden-Tillson H."/>
            <person name="Barnstead M."/>
            <person name="Chin S."/>
            <person name="Evans C.A."/>
            <person name="Ferriera S."/>
            <person name="Fosler C."/>
            <person name="Glodek A."/>
            <person name="Gu Z."/>
            <person name="Jennings D."/>
            <person name="Kraft C.L."/>
            <person name="Nguyen T."/>
            <person name="Pfannkoch C.M."/>
            <person name="Sitter C."/>
            <person name="Sutton G.G."/>
            <person name="Venter J.C."/>
            <person name="Woodage T."/>
            <person name="Smith D."/>
            <person name="Lee H.-M."/>
            <person name="Gustafson E."/>
            <person name="Cahill P."/>
            <person name="Kana A."/>
            <person name="Doucette-Stamm L."/>
            <person name="Weinstock K."/>
            <person name="Fechtel K."/>
            <person name="Weiss R.B."/>
            <person name="Dunn D.M."/>
            <person name="Green E.D."/>
            <person name="Blakesley R.W."/>
            <person name="Bouffard G.G."/>
            <person name="De Jong P.J."/>
            <person name="Osoegawa K."/>
            <person name="Zhu B."/>
            <person name="Marra M."/>
            <person name="Schein J."/>
            <person name="Bosdet I."/>
            <person name="Fjell C."/>
            <person name="Jones S."/>
            <person name="Krzywinski M."/>
            <person name="Mathewson C."/>
            <person name="Siddiqui A."/>
            <person name="Wye N."/>
            <person name="McPherson J."/>
            <person name="Zhao S."/>
            <person name="Fraser C.M."/>
            <person name="Shetty J."/>
            <person name="Shatsman S."/>
            <person name="Geer K."/>
            <person name="Chen Y."/>
            <person name="Abramzon S."/>
            <person name="Nierman W.C."/>
            <person name="Havlak P.H."/>
            <person name="Chen R."/>
            <person name="Durbin K.J."/>
            <person name="Egan A."/>
            <person name="Ren Y."/>
            <person name="Song X.-Z."/>
            <person name="Li B."/>
            <person name="Liu Y."/>
            <person name="Qin X."/>
            <person name="Cawley S."/>
            <person name="Cooney A.J."/>
            <person name="D'Souza L.M."/>
            <person name="Martin K."/>
            <person name="Wu J.Q."/>
            <person name="Gonzalez-Garay M.L."/>
            <person name="Jackson A.R."/>
            <person name="Kalafus K.J."/>
            <person name="McLeod M.P."/>
            <person name="Milosavljevic A."/>
            <person name="Virk D."/>
            <person name="Volkov A."/>
            <person name="Wheeler D.A."/>
            <person name="Zhang Z."/>
            <person name="Bailey J.A."/>
            <person name="Eichler E.E."/>
            <person name="Tuzun E."/>
            <person name="Birney E."/>
            <person name="Mongin E."/>
            <person name="Ureta-Vidal A."/>
            <person name="Woodwark C."/>
            <person name="Zdobnov E."/>
            <person name="Bork P."/>
            <person name="Suyama M."/>
            <person name="Torrents D."/>
            <person name="Alexandersson M."/>
            <person name="Trask B.J."/>
            <person name="Young J.M."/>
            <person name="Huang H."/>
            <person name="Wang H."/>
            <person name="Xing H."/>
            <person name="Daniels S."/>
            <person name="Gietzen D."/>
            <person name="Schmidt J."/>
            <person name="Stevens K."/>
            <person name="Vitt U."/>
            <person name="Wingrove J."/>
            <person name="Camara F."/>
            <person name="Mar Alba M."/>
            <person name="Abril J.F."/>
            <person name="Guigo R."/>
            <person name="Smit A."/>
            <person name="Dubchak I."/>
            <person name="Rubin E.M."/>
            <person name="Couronne O."/>
            <person name="Poliakov A."/>
            <person name="Huebner N."/>
            <person name="Ganten D."/>
            <person name="Goesele C."/>
            <person name="Hummel O."/>
            <person name="Kreitler T."/>
            <person name="Lee Y.-A."/>
            <person name="Monti J."/>
            <person name="Schulz H."/>
            <person name="Zimdahl H."/>
            <person name="Himmelbauer H."/>
            <person name="Lehrach H."/>
            <person name="Jacob H.J."/>
            <person name="Bromberg S."/>
            <person name="Gullings-Handley J."/>
            <person name="Jensen-Seaman M.I."/>
            <person name="Kwitek A.E."/>
            <person name="Lazar J."/>
            <person name="Pasko D."/>
            <person name="Tonellato P.J."/>
            <person name="Twigger S."/>
            <person name="Ponting C.P."/>
            <person name="Duarte J.M."/>
            <person name="Rice S."/>
            <person name="Goodstadt L."/>
            <person name="Beatson S.A."/>
            <person name="Emes R.D."/>
            <person name="Winter E.E."/>
            <person name="Webber C."/>
            <person name="Brandt P."/>
            <person name="Nyakatura G."/>
            <person name="Adetobi M."/>
            <person name="Chiaromonte F."/>
            <person name="Elnitski L."/>
            <person name="Eswara P."/>
            <person name="Hardison R.C."/>
            <person name="Hou M."/>
            <person name="Kolbe D."/>
            <person name="Makova K."/>
            <person name="Miller W."/>
            <person name="Nekrutenko A."/>
            <person name="Riemer C."/>
            <person name="Schwartz S."/>
            <person name="Taylor J."/>
            <person name="Yang S."/>
            <person name="Zhang Y."/>
            <person name="Lindpaintner K."/>
            <person name="Andrews T.D."/>
            <person name="Caccamo M."/>
            <person name="Clamp M."/>
            <person name="Clarke L."/>
            <person name="Curwen V."/>
            <person name="Durbin R.M."/>
            <person name="Eyras E."/>
            <person name="Searle S.M."/>
            <person name="Cooper G.M."/>
            <person name="Batzoglou S."/>
            <person name="Brudno M."/>
            <person name="Sidow A."/>
            <person name="Stone E.A."/>
            <person name="Payseur B.A."/>
            <person name="Bourque G."/>
            <person name="Lopez-Otin C."/>
            <person name="Puente X.S."/>
            <person name="Chakrabarti K."/>
            <person name="Chatterji S."/>
            <person name="Dewey C."/>
            <person name="Pachter L."/>
            <person name="Bray N."/>
            <person name="Yap V.B."/>
            <person name="Caspi A."/>
            <person name="Tesler G."/>
            <person name="Pevzner P.A."/>
            <person name="Haussler D."/>
            <person name="Roskin K.M."/>
            <person name="Baertsch R."/>
            <person name="Clawson H."/>
            <person name="Furey T.S."/>
            <person name="Hinrichs A.S."/>
            <person name="Karolchik D."/>
            <person name="Kent W.J."/>
            <person name="Rosenbloom K.R."/>
            <person name="Trumbower H."/>
            <person name="Weirauch M."/>
            <person name="Cooper D.N."/>
            <person name="Stenson P.D."/>
            <person name="Ma B."/>
            <person name="Brent M."/>
            <person name="Arumugam M."/>
            <person name="Shteynberg D."/>
            <person name="Copley R.R."/>
            <person name="Taylor M.S."/>
            <person name="Riethman H."/>
            <person name="Mudunuri U."/>
            <person name="Peterson J."/>
            <person name="Guyer M."/>
            <person name="Felsenfeld A."/>
            <person name="Old S."/>
            <person name="Mockrin S."/>
            <person name="Collins F.S."/>
        </authorList>
    </citation>
    <scope>NUCLEOTIDE SEQUENCE [LARGE SCALE GENOMIC DNA]</scope>
    <source>
        <strain>Brown Norway</strain>
    </source>
</reference>
<reference key="2">
    <citation type="journal article" date="2004" name="Genome Res.">
        <title>The status, quality, and expansion of the NIH full-length cDNA project: the Mammalian Gene Collection (MGC).</title>
        <authorList>
            <consortium name="The MGC Project Team"/>
        </authorList>
    </citation>
    <scope>NUCLEOTIDE SEQUENCE [LARGE SCALE MRNA]</scope>
    <source>
        <tissue>Heart</tissue>
    </source>
</reference>
<reference key="3">
    <citation type="journal article" date="2003" name="Nat. Genet.">
        <title>Ru2 and Ru encode mouse orthologs of the genes mutated in human Hermansky-Pudlak syndrome types 5 and 6.</title>
        <authorList>
            <person name="Zhang Q."/>
            <person name="Zhao B."/>
            <person name="Li W."/>
            <person name="Oiso N."/>
            <person name="Novak E.K."/>
            <person name="Rusiniak M.E."/>
            <person name="Gautam R."/>
            <person name="Chintala S."/>
            <person name="O'Brien E.P."/>
            <person name="Zhang Y."/>
            <person name="Roe B.A."/>
            <person name="Elliott R.W."/>
            <person name="Eicher E.M."/>
            <person name="Liang P."/>
            <person name="Kratz C."/>
            <person name="Legius E."/>
            <person name="Spritz R.A."/>
            <person name="O'Sullivan T.N."/>
            <person name="Copeland N.G."/>
            <person name="Jenkins N.A."/>
            <person name="Swank R.T."/>
        </authorList>
    </citation>
    <scope>IDENTIFICATION</scope>
</reference>
<reference key="4">
    <citation type="journal article" date="2009" name="J. Biol. Chem.">
        <title>Hermansky-Pudlak syndrome protein complexes associate with phosphatidylinositol 4-kinase type II alpha in neuronal and non-neuronal cells.</title>
        <authorList>
            <person name="Salazar G."/>
            <person name="Zlatic S."/>
            <person name="Craige B."/>
            <person name="Peden A.A."/>
            <person name="Pohl J."/>
            <person name="Faundez V."/>
        </authorList>
    </citation>
    <scope>INTERACTION WITH AP-3 COMPLEX</scope>
</reference>
<dbReference type="EMBL" id="AC093941">
    <property type="status" value="NOT_ANNOTATED_CDS"/>
    <property type="molecule type" value="Genomic_DNA"/>
</dbReference>
<dbReference type="EMBL" id="BK000658">
    <property type="protein sequence ID" value="DAA00971.1"/>
    <property type="molecule type" value="Genomic_DNA"/>
</dbReference>
<dbReference type="EMBL" id="BC086975">
    <property type="protein sequence ID" value="AAH86975.1"/>
    <property type="molecule type" value="mRNA"/>
</dbReference>
<dbReference type="RefSeq" id="NP_852097.1">
    <property type="nucleotide sequence ID" value="NM_181432.2"/>
</dbReference>
<dbReference type="FunCoup" id="Q7M733">
    <property type="interactions" value="379"/>
</dbReference>
<dbReference type="STRING" id="10116.ENSRNOP00000024898"/>
<dbReference type="GlyGen" id="Q7M733">
    <property type="glycosylation" value="1 site"/>
</dbReference>
<dbReference type="PhosphoSitePlus" id="Q7M733"/>
<dbReference type="PaxDb" id="10116-ENSRNOP00000024898"/>
<dbReference type="Ensembl" id="ENSRNOT00000024898.7">
    <property type="protein sequence ID" value="ENSRNOP00000024898.4"/>
    <property type="gene ID" value="ENSRNOG00000018433.7"/>
</dbReference>
<dbReference type="GeneID" id="309446"/>
<dbReference type="KEGG" id="rno:309446"/>
<dbReference type="UCSC" id="RGD:631341">
    <property type="organism name" value="rat"/>
</dbReference>
<dbReference type="AGR" id="RGD:631341"/>
<dbReference type="CTD" id="79803"/>
<dbReference type="RGD" id="631341">
    <property type="gene designation" value="Hps6"/>
</dbReference>
<dbReference type="eggNOG" id="ENOG502QSBH">
    <property type="taxonomic scope" value="Eukaryota"/>
</dbReference>
<dbReference type="GeneTree" id="ENSGT00390000001546"/>
<dbReference type="HOGENOM" id="CLU_019081_0_0_1"/>
<dbReference type="InParanoid" id="Q7M733"/>
<dbReference type="OMA" id="RAWPAGH"/>
<dbReference type="OrthoDB" id="70485at9989"/>
<dbReference type="PhylomeDB" id="Q7M733"/>
<dbReference type="TreeFam" id="TF331635"/>
<dbReference type="PRO" id="PR:Q7M733"/>
<dbReference type="Proteomes" id="UP000002494">
    <property type="component" value="Chromosome 1"/>
</dbReference>
<dbReference type="Bgee" id="ENSRNOG00000018433">
    <property type="expression patterns" value="Expressed in spleen and 19 other cell types or tissues"/>
</dbReference>
<dbReference type="GO" id="GO:0031084">
    <property type="term" value="C:BLOC-2 complex"/>
    <property type="evidence" value="ECO:0000266"/>
    <property type="project" value="RGD"/>
</dbReference>
<dbReference type="GO" id="GO:0005829">
    <property type="term" value="C:cytosol"/>
    <property type="evidence" value="ECO:0007669"/>
    <property type="project" value="UniProtKB-SubCell"/>
</dbReference>
<dbReference type="GO" id="GO:0031901">
    <property type="term" value="C:early endosome membrane"/>
    <property type="evidence" value="ECO:0007669"/>
    <property type="project" value="UniProtKB-SubCell"/>
</dbReference>
<dbReference type="GO" id="GO:0005783">
    <property type="term" value="C:endoplasmic reticulum"/>
    <property type="evidence" value="ECO:0007669"/>
    <property type="project" value="UniProtKB-KW"/>
</dbReference>
<dbReference type="GO" id="GO:0005765">
    <property type="term" value="C:lysosomal membrane"/>
    <property type="evidence" value="ECO:0000250"/>
    <property type="project" value="UniProtKB"/>
</dbReference>
<dbReference type="GO" id="GO:0030742">
    <property type="term" value="F:GTP-dependent protein binding"/>
    <property type="evidence" value="ECO:0000266"/>
    <property type="project" value="RGD"/>
</dbReference>
<dbReference type="GO" id="GO:0031267">
    <property type="term" value="F:small GTPase binding"/>
    <property type="evidence" value="ECO:0000266"/>
    <property type="project" value="RGD"/>
</dbReference>
<dbReference type="GO" id="GO:0007596">
    <property type="term" value="P:blood coagulation"/>
    <property type="evidence" value="ECO:0000266"/>
    <property type="project" value="RGD"/>
</dbReference>
<dbReference type="GO" id="GO:0055088">
    <property type="term" value="P:lipid homeostasis"/>
    <property type="evidence" value="ECO:0000266"/>
    <property type="project" value="RGD"/>
</dbReference>
<dbReference type="GO" id="GO:0006629">
    <property type="term" value="P:lipid metabolic process"/>
    <property type="evidence" value="ECO:0000266"/>
    <property type="project" value="RGD"/>
</dbReference>
<dbReference type="GO" id="GO:0032418">
    <property type="term" value="P:lysosome localization"/>
    <property type="evidence" value="ECO:0000250"/>
    <property type="project" value="UniProtKB"/>
</dbReference>
<dbReference type="GO" id="GO:0043473">
    <property type="term" value="P:pigmentation"/>
    <property type="evidence" value="ECO:0000266"/>
    <property type="project" value="RGD"/>
</dbReference>
<dbReference type="GO" id="GO:0072657">
    <property type="term" value="P:protein localization to membrane"/>
    <property type="evidence" value="ECO:0000266"/>
    <property type="project" value="RGD"/>
</dbReference>
<dbReference type="GO" id="GO:0009306">
    <property type="term" value="P:protein secretion"/>
    <property type="evidence" value="ECO:0000266"/>
    <property type="project" value="RGD"/>
</dbReference>
<dbReference type="InterPro" id="IPR017218">
    <property type="entry name" value="BLOC-2_complex_Hps6_subunit"/>
</dbReference>
<dbReference type="InterPro" id="IPR046822">
    <property type="entry name" value="HPS6_C"/>
</dbReference>
<dbReference type="InterPro" id="IPR046823">
    <property type="entry name" value="HPS6_N"/>
</dbReference>
<dbReference type="PANTHER" id="PTHR14696:SF2">
    <property type="entry name" value="BLOC-2 COMPLEX MEMBER HPS6"/>
    <property type="match status" value="1"/>
</dbReference>
<dbReference type="PANTHER" id="PTHR14696">
    <property type="entry name" value="HERMANSKY-PUDLAK SYNDROME 6 PROTEIN"/>
    <property type="match status" value="1"/>
</dbReference>
<dbReference type="Pfam" id="PF15702">
    <property type="entry name" value="HPS6"/>
    <property type="match status" value="1"/>
</dbReference>
<dbReference type="Pfam" id="PF20468">
    <property type="entry name" value="HPS6_C"/>
    <property type="match status" value="1"/>
</dbReference>
<dbReference type="PIRSF" id="PIRSF037476">
    <property type="entry name" value="BLOC-2_complex_Hps6"/>
    <property type="match status" value="1"/>
</dbReference>
<accession>Q7M733</accession>
<protein>
    <recommendedName>
        <fullName evidence="4">BLOC-2 complex member HPS6</fullName>
    </recommendedName>
    <alternativeName>
        <fullName>Hermansky-Pudlak syndrome 6 protein homolog</fullName>
    </alternativeName>
    <alternativeName>
        <fullName>Ruby-eye protein homolog</fullName>
    </alternativeName>
    <alternativeName>
        <fullName>Ruby-eye-like protein</fullName>
        <shortName>Ru</shortName>
    </alternativeName>
</protein>
<organism>
    <name type="scientific">Rattus norvegicus</name>
    <name type="common">Rat</name>
    <dbReference type="NCBI Taxonomy" id="10116"/>
    <lineage>
        <taxon>Eukaryota</taxon>
        <taxon>Metazoa</taxon>
        <taxon>Chordata</taxon>
        <taxon>Craniata</taxon>
        <taxon>Vertebrata</taxon>
        <taxon>Euteleostomi</taxon>
        <taxon>Mammalia</taxon>
        <taxon>Eutheria</taxon>
        <taxon>Euarchontoglires</taxon>
        <taxon>Glires</taxon>
        <taxon>Rodentia</taxon>
        <taxon>Myomorpha</taxon>
        <taxon>Muroidea</taxon>
        <taxon>Muridae</taxon>
        <taxon>Murinae</taxon>
        <taxon>Rattus</taxon>
    </lineage>
</organism>
<sequence>MKRAGTLRLLSDLSNFTGAARLRELLAGDPAILVRCSPDGRHLLLLRPPGSPAPQLLVAVRGPGLPLERAWSEGDPSPLDVFFVPWLARPALILVWESGLTEVWGVGMEPGWKLLQSTELCPDGGARVMAVAATRGRLVWCEERQPGVEDQPGQLSMAFNHCVCVKTLDTSGEAGTKLGCTHILLHHCPSFGLIASRKELFLVPTSTTWPGVAHVLLIWSPSKGKVIVAAPSLGLSHSKSLNPKQGDTWDFRTLLRGLPGFLSPREPLAVHTWAPSSQGLLLLDLKGKVSLVQCHGGTRTVGLLQEAPVGLQGSAALGTFHGTLACVLGSTLELLDMSSGRLLERKVLSTDRVHLLEPPAPGVKNEEDLETRGALRLLSALGLFCVCWEAPQGLEVPSDKDLVFEEACGYYQRRSLRGTQLTPEELRHNSMFRAPQALASILQGHLPPSALLTTLRAELRDYRSIEQLKAQLVAGDDEETGWTELAEHEVARLLRTHLTGDQLAQFNTIFQALPTAAWSATLQALQLQPDRSGRLRSQAPPDVWKKVLRAPTAGKEHPNGILPPFELLCQCLGQLEPQWLPPFVELAQQQGGPGWGAEGPSLPLYRRALSVLGEEGKRPEALELELLLGSGRPKAVLQAVRQLIKKEQWERALEAGLTLDSSSPLLRSEIFNLLLAEFAQHRRLDTHLPLLCRLCPPEVAPDELLLLLRTHLPDDAGATPFPEPGAEPGAEPPLTVGLVRALLEQTGAQGRSSGPVQSTFEDILWDSGTPPPTPPRGPMTTLQASDHPGQEAWGPSGQGLGAADVGVHS</sequence>
<keyword id="KW-0963">Cytoplasm</keyword>
<keyword id="KW-0256">Endoplasmic reticulum</keyword>
<keyword id="KW-0967">Endosome</keyword>
<keyword id="KW-0458">Lysosome</keyword>
<keyword id="KW-0472">Membrane</keyword>
<keyword id="KW-0492">Microsome</keyword>
<keyword id="KW-1185">Reference proteome</keyword>
<proteinExistence type="evidence at protein level"/>
<comment type="function">
    <text evidence="1">May regulate the synthesis and function of lysosomes and of highly specialized organelles, such as melanosomes and platelet dense granules. Acts as a cargo adapter for the dynein-dynactin motor complex to mediate the transport of lysosomes from the cell periphery to the perinuclear region. Facilitates retrograde lysosomal trafficking by linking the motor complex to lysosomes, and perinuclear positioning of lysosomes is crucial for the delivery of endocytic cargos to lysosomes, for lysosome maturation and functioning.</text>
</comment>
<comment type="subunit">
    <text evidence="1 3">Component of the biogenesis of lysosome-related organelles complex-2 (or BLOC2) composed of HPS3, HPS5 and HPS6. Interacts with HPS5 and HPS3. Interacts with biogenesis of lysosome-related organelles complex-1 (BLOC1) (By similarity). Interacts with AP-3 complex (PubMed:19010779). Interacts with DCTN1 and dynein intermediate chain (By similarity).</text>
</comment>
<comment type="subcellular location">
    <subcellularLocation>
        <location evidence="1">Microsome membrane</location>
    </subcellularLocation>
    <subcellularLocation>
        <location evidence="1">Cytoplasm</location>
        <location evidence="1">Cytosol</location>
    </subcellularLocation>
    <subcellularLocation>
        <location evidence="1">Early endosome membrane</location>
    </subcellularLocation>
    <subcellularLocation>
        <location evidence="1">Lysosome membrane</location>
    </subcellularLocation>
</comment>